<gene>
    <name evidence="4" type="primary">LCY-E</name>
</gene>
<name>LCYE_ONCHC</name>
<accession>D9IL24</accession>
<keyword id="KW-0125">Carotenoid biosynthesis</keyword>
<keyword id="KW-0150">Chloroplast</keyword>
<keyword id="KW-0413">Isomerase</keyword>
<keyword id="KW-0472">Membrane</keyword>
<keyword id="KW-0520">NAD</keyword>
<keyword id="KW-0934">Plastid</keyword>
<keyword id="KW-0809">Transit peptide</keyword>
<keyword id="KW-0812">Transmembrane</keyword>
<keyword id="KW-1133">Transmembrane helix</keyword>
<proteinExistence type="evidence at transcript level"/>
<sequence>MRSAAFSLPFCDWKCRRRLGAADKWPLLKRSFRILPPLIAGGATTEVKEVEKFADEEDFIKAGGSELFFVKMQERKPMEKQRKIADELTKISSGDPMLDLIVIGCGPAGMSLAAEAGKRGLSVGLIGPDLPFTNNYGVWEDEFKGLGLESCIEHVWQDTIAYLDSSDPILISRAYGRVSRHLLHAELLRRCQETGVGFLDSKVEKIIEASDGSSIVVCEGDLMLPCRLATVASGAASGKLLQYEVGGPRVSVQTAYGVEAEVGNNPYDPRSMVFMDYRDHVKGKIISDEEYPTFLYVMPISSTRVFYEETCLASRNAMPFDRLRSKLMSRLKAMGVSILKIYEEEWSYIPVGGSLPNTEQKNLAFGVAASMVHPATGYSIVRSLSEAPQYASVITNILKRNSNSSQNNVIGSSYNPSVLAWRTLWPQEGKRQRAFFLFGLALILQLDIDGIRIFFQTFFRLPDWMWQGFLGSTLSSAGLIWFAFYMFAIAPNSLRICLIKHLLSDPTGSTMIREYLTL</sequence>
<feature type="transit peptide" description="Chloroplast" evidence="2">
    <location>
        <begin position="1"/>
        <end status="unknown"/>
    </location>
</feature>
<feature type="chain" id="PRO_0000426711" description="Lycopene epsilon cyclase, chloroplastic">
    <location>
        <begin status="unknown"/>
        <end position="518"/>
    </location>
</feature>
<feature type="transmembrane region" description="Helical" evidence="2">
    <location>
        <begin position="435"/>
        <end position="455"/>
    </location>
</feature>
<feature type="transmembrane region" description="Helical" evidence="2">
    <location>
        <begin position="469"/>
        <end position="489"/>
    </location>
</feature>
<feature type="binding site" evidence="2">
    <location>
        <begin position="100"/>
        <end position="128"/>
    </location>
    <ligand>
        <name>NAD(+)</name>
        <dbReference type="ChEBI" id="CHEBI:57540"/>
    </ligand>
</feature>
<protein>
    <recommendedName>
        <fullName evidence="5">Lycopene epsilon cyclase, chloroplastic</fullName>
        <shortName evidence="4">OgLCY-E</shortName>
        <ecNumber evidence="1">5.5.1.18</ecNumber>
    </recommendedName>
</protein>
<organism>
    <name type="scientific">Oncidium hybrid cultivar</name>
    <name type="common">Orchid</name>
    <dbReference type="NCBI Taxonomy" id="141207"/>
    <lineage>
        <taxon>Eukaryota</taxon>
        <taxon>Viridiplantae</taxon>
        <taxon>Streptophyta</taxon>
        <taxon>Embryophyta</taxon>
        <taxon>Tracheophyta</taxon>
        <taxon>Spermatophyta</taxon>
        <taxon>Magnoliopsida</taxon>
        <taxon>Liliopsida</taxon>
        <taxon>Asparagales</taxon>
        <taxon>Orchidaceae</taxon>
        <taxon>Epidendroideae</taxon>
        <taxon>Cymbidieae</taxon>
        <taxon>Oncidiinae</taxon>
        <taxon>Oncidium</taxon>
    </lineage>
</organism>
<evidence type="ECO:0000250" key="1">
    <source>
        <dbReference type="UniProtKB" id="Q38932"/>
    </source>
</evidence>
<evidence type="ECO:0000255" key="2"/>
<evidence type="ECO:0000269" key="3">
    <source>
    </source>
</evidence>
<evidence type="ECO:0000303" key="4">
    <source>
    </source>
</evidence>
<evidence type="ECO:0000305" key="5"/>
<reference key="1">
    <citation type="journal article" date="2010" name="Planta">
        <title>Differential expression of carotenoid-related genes determines diversified carotenoid coloration in floral tissues of Oncidium cultivars.</title>
        <authorList>
            <person name="Chiou C.Y."/>
            <person name="Pan H.A."/>
            <person name="Chuang Y.N."/>
            <person name="Yeh K.W."/>
        </authorList>
    </citation>
    <scope>NUCLEOTIDE SEQUENCE [MRNA]</scope>
    <scope>DEVELOPMENTAL STAGE</scope>
    <scope>TISSUE SPECIFICITY</scope>
</reference>
<comment type="function">
    <text evidence="1">Catalyzes the single epsilon-cyclization reaction which converts lycopene to delta-carotene and neurosporene to alpha-zeacarotene. Required for lutein biosynthesis.</text>
</comment>
<comment type="catalytic activity">
    <reaction evidence="1">
        <text>a carotenoid psi-end group = a carotenoid epsilon-end group</text>
        <dbReference type="Rhea" id="RHEA:55616"/>
        <dbReference type="ChEBI" id="CHEBI:139114"/>
        <dbReference type="ChEBI" id="CHEBI:139115"/>
        <dbReference type="EC" id="5.5.1.18"/>
    </reaction>
</comment>
<comment type="pathway">
    <text evidence="5">Carotenoid biosynthesis; alpha-zeacarotene biosynthesis.</text>
</comment>
<comment type="pathway">
    <text evidence="5">Carotenoid biosynthesis; delta-carotene biosynthesis.</text>
</comment>
<comment type="subcellular location">
    <subcellularLocation>
        <location evidence="2">Plastid</location>
        <location evidence="2">Chloroplast membrane</location>
        <topology evidence="2">Multi-pass membrane protein</topology>
    </subcellularLocation>
</comment>
<comment type="tissue specificity">
    <text evidence="3">Expressed in leaves and roots. Detected in flower buds and lips.</text>
</comment>
<comment type="developmental stage">
    <text evidence="3">Expressed during floral development.</text>
</comment>
<comment type="similarity">
    <text evidence="5">Belongs to the lycopene cyclase family.</text>
</comment>
<dbReference type="EC" id="5.5.1.18" evidence="1"/>
<dbReference type="EMBL" id="HM146077">
    <property type="protein sequence ID" value="ADJ67815.1"/>
    <property type="molecule type" value="mRNA"/>
</dbReference>
<dbReference type="SMR" id="D9IL24"/>
<dbReference type="UniPathway" id="UPA00801"/>
<dbReference type="UniPathway" id="UPA00804"/>
<dbReference type="GO" id="GO:0031969">
    <property type="term" value="C:chloroplast membrane"/>
    <property type="evidence" value="ECO:0007669"/>
    <property type="project" value="UniProtKB-SubCell"/>
</dbReference>
<dbReference type="GO" id="GO:0016860">
    <property type="term" value="F:intramolecular oxidoreductase activity"/>
    <property type="evidence" value="ECO:0007669"/>
    <property type="project" value="UniProtKB-ARBA"/>
</dbReference>
<dbReference type="GO" id="GO:0016705">
    <property type="term" value="F:oxidoreductase activity, acting on paired donors, with incorporation or reduction of molecular oxygen"/>
    <property type="evidence" value="ECO:0007669"/>
    <property type="project" value="InterPro"/>
</dbReference>
<dbReference type="GO" id="GO:0016117">
    <property type="term" value="P:carotenoid biosynthetic process"/>
    <property type="evidence" value="ECO:0007669"/>
    <property type="project" value="UniProtKB-KW"/>
</dbReference>
<dbReference type="Gene3D" id="3.50.50.60">
    <property type="entry name" value="FAD/NAD(P)-binding domain"/>
    <property type="match status" value="1"/>
</dbReference>
<dbReference type="InterPro" id="IPR036188">
    <property type="entry name" value="FAD/NAD-bd_sf"/>
</dbReference>
<dbReference type="InterPro" id="IPR010108">
    <property type="entry name" value="Lycopene_cyclase_b/e"/>
</dbReference>
<dbReference type="NCBIfam" id="TIGR01790">
    <property type="entry name" value="carotene-cycl"/>
    <property type="match status" value="1"/>
</dbReference>
<dbReference type="PANTHER" id="PTHR39757">
    <property type="match status" value="1"/>
</dbReference>
<dbReference type="PANTHER" id="PTHR39757:SF3">
    <property type="entry name" value="LYCOPENE EPSILON CYCLASE, CHLOROPLASTIC"/>
    <property type="match status" value="1"/>
</dbReference>
<dbReference type="Pfam" id="PF05834">
    <property type="entry name" value="Lycopene_cycl"/>
    <property type="match status" value="1"/>
</dbReference>
<dbReference type="SUPFAM" id="SSF51905">
    <property type="entry name" value="FAD/NAD(P)-binding domain"/>
    <property type="match status" value="1"/>
</dbReference>